<feature type="chain" id="PRO_1000101099" description="Lysine--tRNA ligase">
    <location>
        <begin position="1"/>
        <end position="508"/>
    </location>
</feature>
<feature type="binding site" evidence="1">
    <location>
        <position position="418"/>
    </location>
    <ligand>
        <name>Mg(2+)</name>
        <dbReference type="ChEBI" id="CHEBI:18420"/>
        <label>1</label>
    </ligand>
</feature>
<feature type="binding site" evidence="1">
    <location>
        <position position="425"/>
    </location>
    <ligand>
        <name>Mg(2+)</name>
        <dbReference type="ChEBI" id="CHEBI:18420"/>
        <label>1</label>
    </ligand>
</feature>
<feature type="binding site" evidence="1">
    <location>
        <position position="425"/>
    </location>
    <ligand>
        <name>Mg(2+)</name>
        <dbReference type="ChEBI" id="CHEBI:18420"/>
        <label>2</label>
    </ligand>
</feature>
<reference key="1">
    <citation type="submission" date="2008-04" db="EMBL/GenBank/DDBJ databases">
        <title>Complete sequence of chromosome 1 of Burkholderia ambifaria MC40-6.</title>
        <authorList>
            <person name="Copeland A."/>
            <person name="Lucas S."/>
            <person name="Lapidus A."/>
            <person name="Glavina del Rio T."/>
            <person name="Dalin E."/>
            <person name="Tice H."/>
            <person name="Pitluck S."/>
            <person name="Chain P."/>
            <person name="Malfatti S."/>
            <person name="Shin M."/>
            <person name="Vergez L."/>
            <person name="Lang D."/>
            <person name="Schmutz J."/>
            <person name="Larimer F."/>
            <person name="Land M."/>
            <person name="Hauser L."/>
            <person name="Kyrpides N."/>
            <person name="Lykidis A."/>
            <person name="Ramette A."/>
            <person name="Konstantinidis K."/>
            <person name="Tiedje J."/>
            <person name="Richardson P."/>
        </authorList>
    </citation>
    <scope>NUCLEOTIDE SEQUENCE [LARGE SCALE GENOMIC DNA]</scope>
    <source>
        <strain>MC40-6</strain>
    </source>
</reference>
<name>SYK_BURA4</name>
<gene>
    <name evidence="1" type="primary">lysS</name>
    <name type="ordered locus">BamMC406_2028</name>
</gene>
<sequence>MTEPTQTQPAVAADENQIIAERREKLRALREQGVAYPNDFRPTHHAADLQATFADSDKAALEANPVEVSVAGRMMLKRVMGKASFATVQDGSGQIQFFVTPNDVGAETYDAFKKWDLGDIVAARGVLFRTNKGELSVQCKELRLLSKALRPLPDKFHGLADQEMRYRQRYVDLIVTPETRDTFRARTRTIASIRKFMDNADFMEVETPMLHPIPGGAAAKPFVTHHNALDMQMFLRIAPELYLKRLIVGGFERVFEINRNFRNEGVSPRHNPEFTMMEFYAAYTDYRWLMDFTEQLIRQAAIDALGTATIQYQGRELDLAKPFHRLTITQAIQKYAPQYTDGQLSDDAFLRTELKRFGVDVSQPAFLNAGIGALQLALFEETAESQLWEPTYIIDYPVEVSPLARASDTTPGITERFELFMTGREIANGFSELNDPEDQAARFKKQVEQKDAGDEEAMFFDADYIRALEHGMPPTGGCGIGIDRLVMLLTDSPTIRDVLLFPHLRRED</sequence>
<proteinExistence type="inferred from homology"/>
<keyword id="KW-0030">Aminoacyl-tRNA synthetase</keyword>
<keyword id="KW-0067">ATP-binding</keyword>
<keyword id="KW-0963">Cytoplasm</keyword>
<keyword id="KW-0436">Ligase</keyword>
<keyword id="KW-0460">Magnesium</keyword>
<keyword id="KW-0479">Metal-binding</keyword>
<keyword id="KW-0547">Nucleotide-binding</keyword>
<keyword id="KW-0648">Protein biosynthesis</keyword>
<comment type="catalytic activity">
    <reaction evidence="1">
        <text>tRNA(Lys) + L-lysine + ATP = L-lysyl-tRNA(Lys) + AMP + diphosphate</text>
        <dbReference type="Rhea" id="RHEA:20792"/>
        <dbReference type="Rhea" id="RHEA-COMP:9696"/>
        <dbReference type="Rhea" id="RHEA-COMP:9697"/>
        <dbReference type="ChEBI" id="CHEBI:30616"/>
        <dbReference type="ChEBI" id="CHEBI:32551"/>
        <dbReference type="ChEBI" id="CHEBI:33019"/>
        <dbReference type="ChEBI" id="CHEBI:78442"/>
        <dbReference type="ChEBI" id="CHEBI:78529"/>
        <dbReference type="ChEBI" id="CHEBI:456215"/>
        <dbReference type="EC" id="6.1.1.6"/>
    </reaction>
</comment>
<comment type="cofactor">
    <cofactor evidence="1">
        <name>Mg(2+)</name>
        <dbReference type="ChEBI" id="CHEBI:18420"/>
    </cofactor>
    <text evidence="1">Binds 3 Mg(2+) ions per subunit.</text>
</comment>
<comment type="subunit">
    <text evidence="1">Homodimer.</text>
</comment>
<comment type="subcellular location">
    <subcellularLocation>
        <location evidence="1">Cytoplasm</location>
    </subcellularLocation>
</comment>
<comment type="similarity">
    <text evidence="1">Belongs to the class-II aminoacyl-tRNA synthetase family.</text>
</comment>
<dbReference type="EC" id="6.1.1.6" evidence="1"/>
<dbReference type="EMBL" id="CP001025">
    <property type="protein sequence ID" value="ACB64509.1"/>
    <property type="molecule type" value="Genomic_DNA"/>
</dbReference>
<dbReference type="RefSeq" id="WP_011657372.1">
    <property type="nucleotide sequence ID" value="NC_010551.1"/>
</dbReference>
<dbReference type="SMR" id="B1YT20"/>
<dbReference type="GeneID" id="93085642"/>
<dbReference type="KEGG" id="bac:BamMC406_2028"/>
<dbReference type="HOGENOM" id="CLU_008255_6_0_4"/>
<dbReference type="OrthoDB" id="9801152at2"/>
<dbReference type="Proteomes" id="UP000001680">
    <property type="component" value="Chromosome 1"/>
</dbReference>
<dbReference type="GO" id="GO:0005829">
    <property type="term" value="C:cytosol"/>
    <property type="evidence" value="ECO:0007669"/>
    <property type="project" value="TreeGrafter"/>
</dbReference>
<dbReference type="GO" id="GO:0005524">
    <property type="term" value="F:ATP binding"/>
    <property type="evidence" value="ECO:0007669"/>
    <property type="project" value="UniProtKB-UniRule"/>
</dbReference>
<dbReference type="GO" id="GO:0004824">
    <property type="term" value="F:lysine-tRNA ligase activity"/>
    <property type="evidence" value="ECO:0007669"/>
    <property type="project" value="UniProtKB-UniRule"/>
</dbReference>
<dbReference type="GO" id="GO:0000287">
    <property type="term" value="F:magnesium ion binding"/>
    <property type="evidence" value="ECO:0007669"/>
    <property type="project" value="UniProtKB-UniRule"/>
</dbReference>
<dbReference type="GO" id="GO:0000049">
    <property type="term" value="F:tRNA binding"/>
    <property type="evidence" value="ECO:0007669"/>
    <property type="project" value="TreeGrafter"/>
</dbReference>
<dbReference type="GO" id="GO:0006430">
    <property type="term" value="P:lysyl-tRNA aminoacylation"/>
    <property type="evidence" value="ECO:0007669"/>
    <property type="project" value="UniProtKB-UniRule"/>
</dbReference>
<dbReference type="CDD" id="cd00775">
    <property type="entry name" value="LysRS_core"/>
    <property type="match status" value="1"/>
</dbReference>
<dbReference type="CDD" id="cd04322">
    <property type="entry name" value="LysRS_N"/>
    <property type="match status" value="1"/>
</dbReference>
<dbReference type="FunFam" id="2.40.50.140:FF:000024">
    <property type="entry name" value="Lysine--tRNA ligase"/>
    <property type="match status" value="1"/>
</dbReference>
<dbReference type="FunFam" id="3.30.930.10:FF:000001">
    <property type="entry name" value="Lysine--tRNA ligase"/>
    <property type="match status" value="1"/>
</dbReference>
<dbReference type="Gene3D" id="3.30.930.10">
    <property type="entry name" value="Bira Bifunctional Protein, Domain 2"/>
    <property type="match status" value="1"/>
</dbReference>
<dbReference type="Gene3D" id="2.40.50.140">
    <property type="entry name" value="Nucleic acid-binding proteins"/>
    <property type="match status" value="1"/>
</dbReference>
<dbReference type="HAMAP" id="MF_00252">
    <property type="entry name" value="Lys_tRNA_synth_class2"/>
    <property type="match status" value="1"/>
</dbReference>
<dbReference type="InterPro" id="IPR004364">
    <property type="entry name" value="Aa-tRNA-synt_II"/>
</dbReference>
<dbReference type="InterPro" id="IPR006195">
    <property type="entry name" value="aa-tRNA-synth_II"/>
</dbReference>
<dbReference type="InterPro" id="IPR045864">
    <property type="entry name" value="aa-tRNA-synth_II/BPL/LPL"/>
</dbReference>
<dbReference type="InterPro" id="IPR002313">
    <property type="entry name" value="Lys-tRNA-ligase_II"/>
</dbReference>
<dbReference type="InterPro" id="IPR044136">
    <property type="entry name" value="Lys-tRNA-ligase_II_N"/>
</dbReference>
<dbReference type="InterPro" id="IPR018149">
    <property type="entry name" value="Lys-tRNA-synth_II_C"/>
</dbReference>
<dbReference type="InterPro" id="IPR012340">
    <property type="entry name" value="NA-bd_OB-fold"/>
</dbReference>
<dbReference type="InterPro" id="IPR004365">
    <property type="entry name" value="NA-bd_OB_tRNA"/>
</dbReference>
<dbReference type="NCBIfam" id="TIGR00499">
    <property type="entry name" value="lysS_bact"/>
    <property type="match status" value="1"/>
</dbReference>
<dbReference type="NCBIfam" id="NF001756">
    <property type="entry name" value="PRK00484.1"/>
    <property type="match status" value="1"/>
</dbReference>
<dbReference type="PANTHER" id="PTHR42918:SF15">
    <property type="entry name" value="LYSINE--TRNA LIGASE, CHLOROPLASTIC_MITOCHONDRIAL"/>
    <property type="match status" value="1"/>
</dbReference>
<dbReference type="PANTHER" id="PTHR42918">
    <property type="entry name" value="LYSYL-TRNA SYNTHETASE"/>
    <property type="match status" value="1"/>
</dbReference>
<dbReference type="Pfam" id="PF00152">
    <property type="entry name" value="tRNA-synt_2"/>
    <property type="match status" value="1"/>
</dbReference>
<dbReference type="Pfam" id="PF01336">
    <property type="entry name" value="tRNA_anti-codon"/>
    <property type="match status" value="1"/>
</dbReference>
<dbReference type="PRINTS" id="PR00982">
    <property type="entry name" value="TRNASYNTHLYS"/>
</dbReference>
<dbReference type="SUPFAM" id="SSF55681">
    <property type="entry name" value="Class II aaRS and biotin synthetases"/>
    <property type="match status" value="1"/>
</dbReference>
<dbReference type="SUPFAM" id="SSF50249">
    <property type="entry name" value="Nucleic acid-binding proteins"/>
    <property type="match status" value="1"/>
</dbReference>
<dbReference type="PROSITE" id="PS50862">
    <property type="entry name" value="AA_TRNA_LIGASE_II"/>
    <property type="match status" value="1"/>
</dbReference>
<evidence type="ECO:0000255" key="1">
    <source>
        <dbReference type="HAMAP-Rule" id="MF_00252"/>
    </source>
</evidence>
<organism>
    <name type="scientific">Burkholderia ambifaria (strain MC40-6)</name>
    <dbReference type="NCBI Taxonomy" id="398577"/>
    <lineage>
        <taxon>Bacteria</taxon>
        <taxon>Pseudomonadati</taxon>
        <taxon>Pseudomonadota</taxon>
        <taxon>Betaproteobacteria</taxon>
        <taxon>Burkholderiales</taxon>
        <taxon>Burkholderiaceae</taxon>
        <taxon>Burkholderia</taxon>
        <taxon>Burkholderia cepacia complex</taxon>
    </lineage>
</organism>
<accession>B1YT20</accession>
<protein>
    <recommendedName>
        <fullName evidence="1">Lysine--tRNA ligase</fullName>
        <ecNumber evidence="1">6.1.1.6</ecNumber>
    </recommendedName>
    <alternativeName>
        <fullName evidence="1">Lysyl-tRNA synthetase</fullName>
        <shortName evidence="1">LysRS</shortName>
    </alternativeName>
</protein>